<evidence type="ECO:0000255" key="1">
    <source>
        <dbReference type="HAMAP-Rule" id="MF_00023"/>
    </source>
</evidence>
<evidence type="ECO:0000256" key="2">
    <source>
        <dbReference type="SAM" id="MobiDB-lite"/>
    </source>
</evidence>
<protein>
    <recommendedName>
        <fullName evidence="1">SsrA-binding protein</fullName>
    </recommendedName>
    <alternativeName>
        <fullName evidence="1">Small protein B</fullName>
    </alternativeName>
</protein>
<gene>
    <name evidence="1" type="primary">smpB</name>
    <name type="ordered locus">NSE_0811</name>
</gene>
<accession>Q2GCW3</accession>
<sequence length="147" mass="17030">MKVIAINKKARFDYSLIDEFEAGIVLLGTEVKALKYHSASLNEAFVAFRRFELWLNNMHVPPYKPASRFNHVPTRSRKLLVHKRQLNKISGAVRTKGLTLVPLSIYVNENGLIKVKFALAKGKKKHDKRQDIKDRDWARKQARQDFS</sequence>
<name>SSRP_NEOSM</name>
<reference key="1">
    <citation type="journal article" date="2006" name="PLoS Genet.">
        <title>Comparative genomics of emerging human ehrlichiosis agents.</title>
        <authorList>
            <person name="Dunning Hotopp J.C."/>
            <person name="Lin M."/>
            <person name="Madupu R."/>
            <person name="Crabtree J."/>
            <person name="Angiuoli S.V."/>
            <person name="Eisen J.A."/>
            <person name="Seshadri R."/>
            <person name="Ren Q."/>
            <person name="Wu M."/>
            <person name="Utterback T.R."/>
            <person name="Smith S."/>
            <person name="Lewis M."/>
            <person name="Khouri H."/>
            <person name="Zhang C."/>
            <person name="Niu H."/>
            <person name="Lin Q."/>
            <person name="Ohashi N."/>
            <person name="Zhi N."/>
            <person name="Nelson W.C."/>
            <person name="Brinkac L.M."/>
            <person name="Dodson R.J."/>
            <person name="Rosovitz M.J."/>
            <person name="Sundaram J.P."/>
            <person name="Daugherty S.C."/>
            <person name="Davidsen T."/>
            <person name="Durkin A.S."/>
            <person name="Gwinn M.L."/>
            <person name="Haft D.H."/>
            <person name="Selengut J.D."/>
            <person name="Sullivan S.A."/>
            <person name="Zafar N."/>
            <person name="Zhou L."/>
            <person name="Benahmed F."/>
            <person name="Forberger H."/>
            <person name="Halpin R."/>
            <person name="Mulligan S."/>
            <person name="Robinson J."/>
            <person name="White O."/>
            <person name="Rikihisa Y."/>
            <person name="Tettelin H."/>
        </authorList>
    </citation>
    <scope>NUCLEOTIDE SEQUENCE [LARGE SCALE GENOMIC DNA]</scope>
    <source>
        <strain>ATCC VR-367 / Miyayama</strain>
    </source>
</reference>
<keyword id="KW-0963">Cytoplasm</keyword>
<keyword id="KW-0694">RNA-binding</keyword>
<dbReference type="EMBL" id="CP000237">
    <property type="protein sequence ID" value="ABD46134.1"/>
    <property type="molecule type" value="Genomic_DNA"/>
</dbReference>
<dbReference type="RefSeq" id="WP_011452189.1">
    <property type="nucleotide sequence ID" value="NC_007798.1"/>
</dbReference>
<dbReference type="SMR" id="Q2GCW3"/>
<dbReference type="STRING" id="222891.NSE_0811"/>
<dbReference type="KEGG" id="nse:NSE_0811"/>
<dbReference type="eggNOG" id="COG0691">
    <property type="taxonomic scope" value="Bacteria"/>
</dbReference>
<dbReference type="HOGENOM" id="CLU_108953_0_1_5"/>
<dbReference type="OrthoDB" id="9805462at2"/>
<dbReference type="Proteomes" id="UP000001942">
    <property type="component" value="Chromosome"/>
</dbReference>
<dbReference type="GO" id="GO:0005829">
    <property type="term" value="C:cytosol"/>
    <property type="evidence" value="ECO:0007669"/>
    <property type="project" value="TreeGrafter"/>
</dbReference>
<dbReference type="GO" id="GO:0003723">
    <property type="term" value="F:RNA binding"/>
    <property type="evidence" value="ECO:0007669"/>
    <property type="project" value="UniProtKB-UniRule"/>
</dbReference>
<dbReference type="GO" id="GO:0070929">
    <property type="term" value="P:trans-translation"/>
    <property type="evidence" value="ECO:0007669"/>
    <property type="project" value="UniProtKB-UniRule"/>
</dbReference>
<dbReference type="CDD" id="cd09294">
    <property type="entry name" value="SmpB"/>
    <property type="match status" value="1"/>
</dbReference>
<dbReference type="Gene3D" id="2.40.280.10">
    <property type="match status" value="1"/>
</dbReference>
<dbReference type="HAMAP" id="MF_00023">
    <property type="entry name" value="SmpB"/>
    <property type="match status" value="1"/>
</dbReference>
<dbReference type="InterPro" id="IPR023620">
    <property type="entry name" value="SmpB"/>
</dbReference>
<dbReference type="InterPro" id="IPR000037">
    <property type="entry name" value="SsrA-bd_prot"/>
</dbReference>
<dbReference type="InterPro" id="IPR020081">
    <property type="entry name" value="SsrA-bd_prot_CS"/>
</dbReference>
<dbReference type="NCBIfam" id="NF003843">
    <property type="entry name" value="PRK05422.1"/>
    <property type="match status" value="1"/>
</dbReference>
<dbReference type="NCBIfam" id="TIGR00086">
    <property type="entry name" value="smpB"/>
    <property type="match status" value="1"/>
</dbReference>
<dbReference type="PANTHER" id="PTHR30308:SF2">
    <property type="entry name" value="SSRA-BINDING PROTEIN"/>
    <property type="match status" value="1"/>
</dbReference>
<dbReference type="PANTHER" id="PTHR30308">
    <property type="entry name" value="TMRNA-BINDING COMPONENT OF TRANS-TRANSLATION TAGGING COMPLEX"/>
    <property type="match status" value="1"/>
</dbReference>
<dbReference type="Pfam" id="PF01668">
    <property type="entry name" value="SmpB"/>
    <property type="match status" value="1"/>
</dbReference>
<dbReference type="SUPFAM" id="SSF74982">
    <property type="entry name" value="Small protein B (SmpB)"/>
    <property type="match status" value="1"/>
</dbReference>
<dbReference type="PROSITE" id="PS01317">
    <property type="entry name" value="SSRP"/>
    <property type="match status" value="1"/>
</dbReference>
<proteinExistence type="inferred from homology"/>
<feature type="chain" id="PRO_1000002089" description="SsrA-binding protein">
    <location>
        <begin position="1"/>
        <end position="147"/>
    </location>
</feature>
<feature type="region of interest" description="Disordered" evidence="2">
    <location>
        <begin position="124"/>
        <end position="147"/>
    </location>
</feature>
<feature type="compositionally biased region" description="Basic and acidic residues" evidence="2">
    <location>
        <begin position="128"/>
        <end position="147"/>
    </location>
</feature>
<organism>
    <name type="scientific">Neorickettsia sennetsu (strain ATCC VR-367 / Miyayama)</name>
    <name type="common">Ehrlichia sennetsu</name>
    <dbReference type="NCBI Taxonomy" id="222891"/>
    <lineage>
        <taxon>Bacteria</taxon>
        <taxon>Pseudomonadati</taxon>
        <taxon>Pseudomonadota</taxon>
        <taxon>Alphaproteobacteria</taxon>
        <taxon>Rickettsiales</taxon>
        <taxon>Anaplasmataceae</taxon>
        <taxon>Neorickettsia</taxon>
    </lineage>
</organism>
<comment type="function">
    <text evidence="1">Required for rescue of stalled ribosomes mediated by trans-translation. Binds to transfer-messenger RNA (tmRNA), required for stable association of tmRNA with ribosomes. tmRNA and SmpB together mimic tRNA shape, replacing the anticodon stem-loop with SmpB. tmRNA is encoded by the ssrA gene; the 2 termini fold to resemble tRNA(Ala) and it encodes a 'tag peptide', a short internal open reading frame. During trans-translation Ala-aminoacylated tmRNA acts like a tRNA, entering the A-site of stalled ribosomes, displacing the stalled mRNA. The ribosome then switches to translate the ORF on the tmRNA; the nascent peptide is terminated with the 'tag peptide' encoded by the tmRNA and targeted for degradation. The ribosome is freed to recommence translation, which seems to be the essential function of trans-translation.</text>
</comment>
<comment type="subcellular location">
    <subcellularLocation>
        <location evidence="1">Cytoplasm</location>
    </subcellularLocation>
    <text evidence="1">The tmRNA-SmpB complex associates with stalled 70S ribosomes.</text>
</comment>
<comment type="similarity">
    <text evidence="1">Belongs to the SmpB family.</text>
</comment>